<dbReference type="EMBL" id="CP000891">
    <property type="protein sequence ID" value="ABX48120.1"/>
    <property type="molecule type" value="Genomic_DNA"/>
</dbReference>
<dbReference type="RefSeq" id="WP_012196741.1">
    <property type="nucleotide sequence ID" value="NC_009997.1"/>
</dbReference>
<dbReference type="SMR" id="A9L2N8"/>
<dbReference type="KEGG" id="sbn:Sbal195_0944"/>
<dbReference type="HOGENOM" id="CLU_005912_9_2_6"/>
<dbReference type="Proteomes" id="UP000000770">
    <property type="component" value="Chromosome"/>
</dbReference>
<dbReference type="GO" id="GO:0005886">
    <property type="term" value="C:plasma membrane"/>
    <property type="evidence" value="ECO:0007669"/>
    <property type="project" value="UniProtKB-SubCell"/>
</dbReference>
<dbReference type="GO" id="GO:0050660">
    <property type="term" value="F:flavin adenine dinucleotide binding"/>
    <property type="evidence" value="ECO:0007669"/>
    <property type="project" value="InterPro"/>
</dbReference>
<dbReference type="GO" id="GO:0015386">
    <property type="term" value="F:potassium:proton antiporter activity"/>
    <property type="evidence" value="ECO:0007669"/>
    <property type="project" value="UniProtKB-UniRule"/>
</dbReference>
<dbReference type="GO" id="GO:0006884">
    <property type="term" value="P:cell volume homeostasis"/>
    <property type="evidence" value="ECO:0007669"/>
    <property type="project" value="InterPro"/>
</dbReference>
<dbReference type="Gene3D" id="1.20.1530.20">
    <property type="match status" value="1"/>
</dbReference>
<dbReference type="Gene3D" id="3.30.70.1450">
    <property type="entry name" value="Regulator of K+ conductance, C-terminal domain"/>
    <property type="match status" value="1"/>
</dbReference>
<dbReference type="HAMAP" id="MF_01075">
    <property type="entry name" value="NhaP2"/>
    <property type="match status" value="1"/>
</dbReference>
<dbReference type="InterPro" id="IPR006153">
    <property type="entry name" value="Cation/H_exchanger_TM"/>
</dbReference>
<dbReference type="InterPro" id="IPR036318">
    <property type="entry name" value="FAD-bd_PCMH-like_sf"/>
</dbReference>
<dbReference type="InterPro" id="IPR038770">
    <property type="entry name" value="Na+/solute_symporter_sf"/>
</dbReference>
<dbReference type="InterPro" id="IPR023729">
    <property type="entry name" value="NhaP2"/>
</dbReference>
<dbReference type="InterPro" id="IPR006037">
    <property type="entry name" value="RCK_C"/>
</dbReference>
<dbReference type="InterPro" id="IPR036721">
    <property type="entry name" value="RCK_C_sf"/>
</dbReference>
<dbReference type="InterPro" id="IPR005170">
    <property type="entry name" value="Transptr-assoc_dom"/>
</dbReference>
<dbReference type="NCBIfam" id="NF003714">
    <property type="entry name" value="PRK05326.1-1"/>
    <property type="match status" value="1"/>
</dbReference>
<dbReference type="NCBIfam" id="NF003715">
    <property type="entry name" value="PRK05326.1-2"/>
    <property type="match status" value="1"/>
</dbReference>
<dbReference type="NCBIfam" id="NF003716">
    <property type="entry name" value="PRK05326.1-3"/>
    <property type="match status" value="1"/>
</dbReference>
<dbReference type="PANTHER" id="PTHR32507:SF7">
    <property type="entry name" value="K(+)_H(+) ANTIPORTER NHAP2"/>
    <property type="match status" value="1"/>
</dbReference>
<dbReference type="PANTHER" id="PTHR32507">
    <property type="entry name" value="NA(+)/H(+) ANTIPORTER 1"/>
    <property type="match status" value="1"/>
</dbReference>
<dbReference type="Pfam" id="PF03471">
    <property type="entry name" value="CorC_HlyC"/>
    <property type="match status" value="1"/>
</dbReference>
<dbReference type="Pfam" id="PF00999">
    <property type="entry name" value="Na_H_Exchanger"/>
    <property type="match status" value="1"/>
</dbReference>
<dbReference type="Pfam" id="PF02080">
    <property type="entry name" value="TrkA_C"/>
    <property type="match status" value="1"/>
</dbReference>
<dbReference type="SMART" id="SM01091">
    <property type="entry name" value="CorC_HlyC"/>
    <property type="match status" value="1"/>
</dbReference>
<dbReference type="SUPFAM" id="SSF56176">
    <property type="entry name" value="FAD-binding/transporter-associated domain-like"/>
    <property type="match status" value="1"/>
</dbReference>
<dbReference type="SUPFAM" id="SSF116726">
    <property type="entry name" value="TrkA C-terminal domain-like"/>
    <property type="match status" value="1"/>
</dbReference>
<dbReference type="PROSITE" id="PS51202">
    <property type="entry name" value="RCK_C"/>
    <property type="match status" value="1"/>
</dbReference>
<comment type="function">
    <text evidence="1">K(+)/H(+) antiporter that extrudes potassium in exchange for external protons and maintains the internal concentration of potassium under toxic levels.</text>
</comment>
<comment type="catalytic activity">
    <reaction evidence="1">
        <text>K(+)(in) + H(+)(out) = K(+)(out) + H(+)(in)</text>
        <dbReference type="Rhea" id="RHEA:29467"/>
        <dbReference type="ChEBI" id="CHEBI:15378"/>
        <dbReference type="ChEBI" id="CHEBI:29103"/>
    </reaction>
    <physiologicalReaction direction="left-to-right" evidence="1">
        <dbReference type="Rhea" id="RHEA:29468"/>
    </physiologicalReaction>
</comment>
<comment type="subcellular location">
    <subcellularLocation>
        <location evidence="1">Cell inner membrane</location>
        <topology evidence="1">Multi-pass membrane protein</topology>
    </subcellularLocation>
</comment>
<comment type="similarity">
    <text evidence="1">Belongs to the monovalent cation:proton antiporter 1 (CPA1) transporter (TC 2.A.36) family. NhaP2 subfamily.</text>
</comment>
<name>NHAP2_SHEB9</name>
<keyword id="KW-0050">Antiport</keyword>
<keyword id="KW-0997">Cell inner membrane</keyword>
<keyword id="KW-1003">Cell membrane</keyword>
<keyword id="KW-0406">Ion transport</keyword>
<keyword id="KW-0472">Membrane</keyword>
<keyword id="KW-0630">Potassium</keyword>
<keyword id="KW-0633">Potassium transport</keyword>
<keyword id="KW-0812">Transmembrane</keyword>
<keyword id="KW-1133">Transmembrane helix</keyword>
<keyword id="KW-0813">Transport</keyword>
<evidence type="ECO:0000255" key="1">
    <source>
        <dbReference type="HAMAP-Rule" id="MF_01075"/>
    </source>
</evidence>
<organism>
    <name type="scientific">Shewanella baltica (strain OS195)</name>
    <dbReference type="NCBI Taxonomy" id="399599"/>
    <lineage>
        <taxon>Bacteria</taxon>
        <taxon>Pseudomonadati</taxon>
        <taxon>Pseudomonadota</taxon>
        <taxon>Gammaproteobacteria</taxon>
        <taxon>Alteromonadales</taxon>
        <taxon>Shewanellaceae</taxon>
        <taxon>Shewanella</taxon>
    </lineage>
</organism>
<proteinExistence type="inferred from homology"/>
<sequence length="576" mass="61984">MDANSINSFFLIGALLTAVSVLLSPMSSRLGIPILLIFLAVGILAGEDGPGGILFDDYSTAYLVSNLALAIILLDGGMRTRVASFRVALWPALSLATFGVAITTSITGMMAAWLFDLHWLQGLLVGAIVGSTDAAAVFSLLKGRSLNERVGATLEIESGSNDPMAVFLTVTLIAILANVDTEMSFSFMFISFIKQFGLGICLGLGGGWMLWKLVNLSKLADGLYSILVLSGGLIIYAASNKLGGSGILSIYLVGLFLGNKPTRGRHAILNVLDGMTWVSQIGMFLVLGLLLTPSDLVDILIPGFALAFGMILFARPVAVWISLLPFKSFSSRDRWFISWVGLRGAVPIILAVFPMMAGLPGAQLYFNLAFFVVLVSLLVQGASLTTAARLAKVELPPKPLPVSRSGVEIYPSSEWEVFVYRLSESKWCIGEPLKRLAMPDGTRIAAVFRDDTLLHPSGSTRLEAGDILCVLGQEKSLEALSNLFSQAPENKEVQRFFGDFFIETDVKLADLAPIYGLSLDNLADDMTVADLVVLQLGANPVLGDQFQWQSLHWVVAGLYEGKVTNVGIRLPTEHSL</sequence>
<protein>
    <recommendedName>
        <fullName evidence="1">K(+)/H(+) antiporter NhaP2</fullName>
    </recommendedName>
    <alternativeName>
        <fullName evidence="1">Potassium/proton antiporter NhaP2</fullName>
    </alternativeName>
</protein>
<reference key="1">
    <citation type="submission" date="2007-11" db="EMBL/GenBank/DDBJ databases">
        <title>Complete sequence of chromosome of Shewanella baltica OS195.</title>
        <authorList>
            <consortium name="US DOE Joint Genome Institute"/>
            <person name="Copeland A."/>
            <person name="Lucas S."/>
            <person name="Lapidus A."/>
            <person name="Barry K."/>
            <person name="Glavina del Rio T."/>
            <person name="Dalin E."/>
            <person name="Tice H."/>
            <person name="Pitluck S."/>
            <person name="Chain P."/>
            <person name="Malfatti S."/>
            <person name="Shin M."/>
            <person name="Vergez L."/>
            <person name="Schmutz J."/>
            <person name="Larimer F."/>
            <person name="Land M."/>
            <person name="Hauser L."/>
            <person name="Kyrpides N."/>
            <person name="Kim E."/>
            <person name="Brettar I."/>
            <person name="Rodrigues J."/>
            <person name="Konstantinidis K."/>
            <person name="Klappenbach J."/>
            <person name="Hofle M."/>
            <person name="Tiedje J."/>
            <person name="Richardson P."/>
        </authorList>
    </citation>
    <scope>NUCLEOTIDE SEQUENCE [LARGE SCALE GENOMIC DNA]</scope>
    <source>
        <strain>OS195</strain>
    </source>
</reference>
<feature type="chain" id="PRO_1000084514" description="K(+)/H(+) antiporter NhaP2">
    <location>
        <begin position="1"/>
        <end position="576"/>
    </location>
</feature>
<feature type="transmembrane region" description="Helical" evidence="1">
    <location>
        <begin position="6"/>
        <end position="26"/>
    </location>
</feature>
<feature type="transmembrane region" description="Helical" evidence="1">
    <location>
        <begin position="34"/>
        <end position="54"/>
    </location>
</feature>
<feature type="transmembrane region" description="Helical" evidence="1">
    <location>
        <begin position="58"/>
        <end position="78"/>
    </location>
</feature>
<feature type="transmembrane region" description="Helical" evidence="1">
    <location>
        <begin position="87"/>
        <end position="107"/>
    </location>
</feature>
<feature type="transmembrane region" description="Helical" evidence="1">
    <location>
        <begin position="109"/>
        <end position="129"/>
    </location>
</feature>
<feature type="transmembrane region" description="Helical" evidence="1">
    <location>
        <begin position="163"/>
        <end position="183"/>
    </location>
</feature>
<feature type="transmembrane region" description="Helical" evidence="1">
    <location>
        <begin position="185"/>
        <end position="205"/>
    </location>
</feature>
<feature type="transmembrane region" description="Helical" evidence="1">
    <location>
        <begin position="219"/>
        <end position="239"/>
    </location>
</feature>
<feature type="transmembrane region" description="Helical" evidence="1">
    <location>
        <begin position="242"/>
        <end position="262"/>
    </location>
</feature>
<feature type="transmembrane region" description="Helical" evidence="1">
    <location>
        <begin position="271"/>
        <end position="291"/>
    </location>
</feature>
<feature type="transmembrane region" description="Helical" evidence="1">
    <location>
        <begin position="299"/>
        <end position="319"/>
    </location>
</feature>
<feature type="transmembrane region" description="Helical" evidence="1">
    <location>
        <begin position="335"/>
        <end position="355"/>
    </location>
</feature>
<feature type="transmembrane region" description="Helical" evidence="1">
    <location>
        <begin position="359"/>
        <end position="379"/>
    </location>
</feature>
<feature type="domain" description="RCK C-terminal" evidence="1">
    <location>
        <begin position="405"/>
        <end position="486"/>
    </location>
</feature>
<accession>A9L2N8</accession>
<gene>
    <name evidence="1" type="primary">nhaP2</name>
    <name type="synonym">cvrA</name>
    <name type="ordered locus">Sbal195_0944</name>
</gene>